<sequence length="229" mass="26470">MIAIIPAFNEEKNILKVLKDLEKLRVDAVVVDDGSKDNTSKIVEEFAKKAKINVYLIRNEKNEGKAKAIEKGTKFALSLNKYKYIIYIDGDYQHKPMDIPKLLKKLEDTNADAVFGIRKYKHIPLHRQISNFFASILTSLAVLIYSKRFYFFRDVQCGFRIIKAEFLKDMKFGDGYAVEHFIALQLAKKGAKIVEEYVSVEYHDEAVSYITTKKILEVAKQVIKFIFLE</sequence>
<keyword id="KW-1185">Reference proteome</keyword>
<dbReference type="EMBL" id="L77117">
    <property type="protein sequence ID" value="AAB98538.1"/>
    <property type="molecule type" value="Genomic_DNA"/>
</dbReference>
<dbReference type="PIR" id="H64367">
    <property type="entry name" value="H64367"/>
</dbReference>
<dbReference type="RefSeq" id="WP_010870048.1">
    <property type="nucleotide sequence ID" value="NC_000909.1"/>
</dbReference>
<dbReference type="SMR" id="Q57964"/>
<dbReference type="FunCoup" id="Q57964">
    <property type="interactions" value="18"/>
</dbReference>
<dbReference type="STRING" id="243232.MJ_0544"/>
<dbReference type="CAZy" id="GT2">
    <property type="family name" value="Glycosyltransferase Family 2"/>
</dbReference>
<dbReference type="PaxDb" id="243232-MJ_0544"/>
<dbReference type="EnsemblBacteria" id="AAB98538">
    <property type="protein sequence ID" value="AAB98538"/>
    <property type="gene ID" value="MJ_0544"/>
</dbReference>
<dbReference type="GeneID" id="1451409"/>
<dbReference type="KEGG" id="mja:MJ_0544"/>
<dbReference type="eggNOG" id="arCOG00895">
    <property type="taxonomic scope" value="Archaea"/>
</dbReference>
<dbReference type="HOGENOM" id="CLU_033536_7_4_2"/>
<dbReference type="InParanoid" id="Q57964"/>
<dbReference type="OrthoDB" id="11098at2157"/>
<dbReference type="PhylomeDB" id="Q57964"/>
<dbReference type="Proteomes" id="UP000000805">
    <property type="component" value="Chromosome"/>
</dbReference>
<dbReference type="GO" id="GO:0006487">
    <property type="term" value="P:protein N-linked glycosylation"/>
    <property type="evidence" value="ECO:0000318"/>
    <property type="project" value="GO_Central"/>
</dbReference>
<dbReference type="CDD" id="cd04179">
    <property type="entry name" value="DPM_DPG-synthase_like"/>
    <property type="match status" value="1"/>
</dbReference>
<dbReference type="FunFam" id="3.90.550.10:FF:000123">
    <property type="entry name" value="Cell wall biosynthesis glycosyltransferase"/>
    <property type="match status" value="1"/>
</dbReference>
<dbReference type="Gene3D" id="3.90.550.10">
    <property type="entry name" value="Spore Coat Polysaccharide Biosynthesis Protein SpsA, Chain A"/>
    <property type="match status" value="1"/>
</dbReference>
<dbReference type="InterPro" id="IPR001173">
    <property type="entry name" value="Glyco_trans_2-like"/>
</dbReference>
<dbReference type="InterPro" id="IPR050256">
    <property type="entry name" value="Glycosyltransferase_2"/>
</dbReference>
<dbReference type="InterPro" id="IPR029044">
    <property type="entry name" value="Nucleotide-diphossugar_trans"/>
</dbReference>
<dbReference type="PANTHER" id="PTHR48090:SF7">
    <property type="entry name" value="RFBJ PROTEIN"/>
    <property type="match status" value="1"/>
</dbReference>
<dbReference type="PANTHER" id="PTHR48090">
    <property type="entry name" value="UNDECAPRENYL-PHOSPHATE 4-DEOXY-4-FORMAMIDO-L-ARABINOSE TRANSFERASE-RELATED"/>
    <property type="match status" value="1"/>
</dbReference>
<dbReference type="Pfam" id="PF00535">
    <property type="entry name" value="Glycos_transf_2"/>
    <property type="match status" value="1"/>
</dbReference>
<dbReference type="SUPFAM" id="SSF53448">
    <property type="entry name" value="Nucleotide-diphospho-sugar transferases"/>
    <property type="match status" value="1"/>
</dbReference>
<feature type="chain" id="PRO_0000106922" description="Uncharacterized protein MJ0544">
    <location>
        <begin position="1"/>
        <end position="229"/>
    </location>
</feature>
<gene>
    <name type="ordered locus">MJ0544</name>
</gene>
<proteinExistence type="predicted"/>
<accession>Q57964</accession>
<name>Y544_METJA</name>
<reference key="1">
    <citation type="journal article" date="1996" name="Science">
        <title>Complete genome sequence of the methanogenic archaeon, Methanococcus jannaschii.</title>
        <authorList>
            <person name="Bult C.J."/>
            <person name="White O."/>
            <person name="Olsen G.J."/>
            <person name="Zhou L."/>
            <person name="Fleischmann R.D."/>
            <person name="Sutton G.G."/>
            <person name="Blake J.A."/>
            <person name="FitzGerald L.M."/>
            <person name="Clayton R.A."/>
            <person name="Gocayne J.D."/>
            <person name="Kerlavage A.R."/>
            <person name="Dougherty B.A."/>
            <person name="Tomb J.-F."/>
            <person name="Adams M.D."/>
            <person name="Reich C.I."/>
            <person name="Overbeek R."/>
            <person name="Kirkness E.F."/>
            <person name="Weinstock K.G."/>
            <person name="Merrick J.M."/>
            <person name="Glodek A."/>
            <person name="Scott J.L."/>
            <person name="Geoghagen N.S.M."/>
            <person name="Weidman J.F."/>
            <person name="Fuhrmann J.L."/>
            <person name="Nguyen D."/>
            <person name="Utterback T.R."/>
            <person name="Kelley J.M."/>
            <person name="Peterson J.D."/>
            <person name="Sadow P.W."/>
            <person name="Hanna M.C."/>
            <person name="Cotton M.D."/>
            <person name="Roberts K.M."/>
            <person name="Hurst M.A."/>
            <person name="Kaine B.P."/>
            <person name="Borodovsky M."/>
            <person name="Klenk H.-P."/>
            <person name="Fraser C.M."/>
            <person name="Smith H.O."/>
            <person name="Woese C.R."/>
            <person name="Venter J.C."/>
        </authorList>
    </citation>
    <scope>NUCLEOTIDE SEQUENCE [LARGE SCALE GENOMIC DNA]</scope>
    <source>
        <strain>ATCC 43067 / DSM 2661 / JAL-1 / JCM 10045 / NBRC 100440</strain>
    </source>
</reference>
<protein>
    <recommendedName>
        <fullName>Uncharacterized protein MJ0544</fullName>
    </recommendedName>
</protein>
<organism>
    <name type="scientific">Methanocaldococcus jannaschii (strain ATCC 43067 / DSM 2661 / JAL-1 / JCM 10045 / NBRC 100440)</name>
    <name type="common">Methanococcus jannaschii</name>
    <dbReference type="NCBI Taxonomy" id="243232"/>
    <lineage>
        <taxon>Archaea</taxon>
        <taxon>Methanobacteriati</taxon>
        <taxon>Methanobacteriota</taxon>
        <taxon>Methanomada group</taxon>
        <taxon>Methanococci</taxon>
        <taxon>Methanococcales</taxon>
        <taxon>Methanocaldococcaceae</taxon>
        <taxon>Methanocaldococcus</taxon>
    </lineage>
</organism>